<accession>P85635</accession>
<reference evidence="4" key="1">
    <citation type="journal article" date="2009" name="BMC Evol. Biol.">
        <title>A proteomic approach for studying insect phylogeny: CAPA peptides of ancient insect taxa (Dictyoptera, Blattoptera) as a test case.</title>
        <authorList>
            <person name="Roth S."/>
            <person name="Fromm B."/>
            <person name="Gaede G."/>
            <person name="Predel R."/>
        </authorList>
    </citation>
    <scope>PROTEIN SEQUENCE</scope>
    <scope>AMIDATION AT THR-11</scope>
    <source>
        <tissue evidence="2">Abdominal perisympathetic organs</tissue>
    </source>
</reference>
<protein>
    <recommendedName>
        <fullName evidence="3">Periviscerokinin-1</fullName>
        <shortName evidence="3">GroGr-PVK-1</shortName>
    </recommendedName>
</protein>
<organism>
    <name type="scientific">Gromphadorhina grandidieri</name>
    <name type="common">Cockroach</name>
    <dbReference type="NCBI Taxonomy" id="521511"/>
    <lineage>
        <taxon>Eukaryota</taxon>
        <taxon>Metazoa</taxon>
        <taxon>Ecdysozoa</taxon>
        <taxon>Arthropoda</taxon>
        <taxon>Hexapoda</taxon>
        <taxon>Insecta</taxon>
        <taxon>Pterygota</taxon>
        <taxon>Neoptera</taxon>
        <taxon>Polyneoptera</taxon>
        <taxon>Dictyoptera</taxon>
        <taxon>Blattodea</taxon>
        <taxon>Blaberoidea</taxon>
        <taxon>Blaberidae</taxon>
        <taxon>Oxyhaloinae</taxon>
        <taxon>Gromphadorhina</taxon>
    </lineage>
</organism>
<dbReference type="GO" id="GO:0005576">
    <property type="term" value="C:extracellular region"/>
    <property type="evidence" value="ECO:0007669"/>
    <property type="project" value="UniProtKB-SubCell"/>
</dbReference>
<dbReference type="GO" id="GO:0007218">
    <property type="term" value="P:neuropeptide signaling pathway"/>
    <property type="evidence" value="ECO:0007669"/>
    <property type="project" value="UniProtKB-KW"/>
</dbReference>
<dbReference type="InterPro" id="IPR013231">
    <property type="entry name" value="Periviscerokinin"/>
</dbReference>
<dbReference type="Pfam" id="PF08259">
    <property type="entry name" value="Periviscerokin"/>
    <property type="match status" value="1"/>
</dbReference>
<name>PVK1_GROGR</name>
<proteinExistence type="evidence at protein level"/>
<evidence type="ECO:0000255" key="1"/>
<evidence type="ECO:0000269" key="2">
    <source>
    </source>
</evidence>
<evidence type="ECO:0000303" key="3">
    <source>
    </source>
</evidence>
<evidence type="ECO:0000305" key="4"/>
<sequence length="11" mass="1091">GSSGLIPFGRT</sequence>
<keyword id="KW-0027">Amidation</keyword>
<keyword id="KW-0903">Direct protein sequencing</keyword>
<keyword id="KW-0527">Neuropeptide</keyword>
<keyword id="KW-0964">Secreted</keyword>
<feature type="peptide" id="PRO_0000378744" description="Periviscerokinin-1" evidence="2">
    <location>
        <begin position="1"/>
        <end position="11"/>
    </location>
</feature>
<feature type="modified residue" description="Threonine amide" evidence="2">
    <location>
        <position position="11"/>
    </location>
</feature>
<comment type="function">
    <text evidence="4">Mediates visceral muscle contractile activity (myotropic activity).</text>
</comment>
<comment type="subcellular location">
    <subcellularLocation>
        <location evidence="4">Secreted</location>
    </subcellularLocation>
</comment>
<comment type="similarity">
    <text evidence="1">Belongs to the periviscerokinin family.</text>
</comment>